<gene>
    <name type="primary">pit</name>
    <name type="ordered locus">BU587</name>
</gene>
<reference key="1">
    <citation type="journal article" date="2000" name="Nature">
        <title>Genome sequence of the endocellular bacterial symbiont of aphids Buchnera sp. APS.</title>
        <authorList>
            <person name="Shigenobu S."/>
            <person name="Watanabe H."/>
            <person name="Hattori M."/>
            <person name="Sakaki Y."/>
            <person name="Ishikawa H."/>
        </authorList>
    </citation>
    <scope>NUCLEOTIDE SEQUENCE [LARGE SCALE GENOMIC DNA]</scope>
    <source>
        <strain>APS</strain>
    </source>
</reference>
<sequence>MLHLFSYSDLNHSLLVFLALFFVLFYEAINGFHDTANAVSTLIYTRAMSAHVAVIMSGIFNFLGVLLGGLTVAYTIVHLLPNDLLLNATSKNALAMVFSMLLAAIIWNLSTWYFCLPASSSHSLIGAIIGIGLTNAFVTDSSLVDAFNIPKMTSVFLSLVFSPIIGLIIAGSLIFLLRYYLNNNKIFYRIHMTPLERKEKDGKKIPPFLIRMALILSSIGVSYAHGANDGQKGIGLIMLVLIGIVPSSFLVNLNTNKYEINCTKHTLNHLEKYFLEKNIKKSNIIKNKEEINNLVVRSQSYNSIKNIKNTKLLLKNISNYNDLSIKKRFQLRHYLLCISDSIDKKVNSSDICSKDKRFLIHSKKVILKTIEYAPMWIILIVALSLSIGTMIGWKRIVVTIGEKIGKKRMTYAQAMSAQITASFSIGIASYTGIPVSTTHILSSSVAGTMLIDGDGIQTKTIKNIALAWILTLPVSMLLSSFLYWIALFLI</sequence>
<evidence type="ECO:0000250" key="1">
    <source>
        <dbReference type="UniProtKB" id="P0AFJ7"/>
    </source>
</evidence>
<evidence type="ECO:0000255" key="2"/>
<evidence type="ECO:0000305" key="3"/>
<proteinExistence type="inferred from homology"/>
<accession>P57647</accession>
<organism>
    <name type="scientific">Buchnera aphidicola subsp. Acyrthosiphon pisum (strain APS)</name>
    <name type="common">Acyrthosiphon pisum symbiotic bacterium</name>
    <dbReference type="NCBI Taxonomy" id="107806"/>
    <lineage>
        <taxon>Bacteria</taxon>
        <taxon>Pseudomonadati</taxon>
        <taxon>Pseudomonadota</taxon>
        <taxon>Gammaproteobacteria</taxon>
        <taxon>Enterobacterales</taxon>
        <taxon>Erwiniaceae</taxon>
        <taxon>Buchnera</taxon>
    </lineage>
</organism>
<dbReference type="EMBL" id="BA000003">
    <property type="protein sequence ID" value="BAB13276.1"/>
    <property type="molecule type" value="Genomic_DNA"/>
</dbReference>
<dbReference type="RefSeq" id="NP_240390.1">
    <property type="nucleotide sequence ID" value="NC_002528.1"/>
</dbReference>
<dbReference type="RefSeq" id="WP_010896178.1">
    <property type="nucleotide sequence ID" value="NC_002528.1"/>
</dbReference>
<dbReference type="SMR" id="P57647"/>
<dbReference type="STRING" id="563178.BUAP5A_580"/>
<dbReference type="EnsemblBacteria" id="BAB13276">
    <property type="protein sequence ID" value="BAB13276"/>
    <property type="gene ID" value="BAB13276"/>
</dbReference>
<dbReference type="KEGG" id="buc:BU587"/>
<dbReference type="PATRIC" id="fig|107806.10.peg.592"/>
<dbReference type="eggNOG" id="COG0306">
    <property type="taxonomic scope" value="Bacteria"/>
</dbReference>
<dbReference type="HOGENOM" id="CLU_015355_4_0_6"/>
<dbReference type="Proteomes" id="UP000001806">
    <property type="component" value="Chromosome"/>
</dbReference>
<dbReference type="GO" id="GO:0005886">
    <property type="term" value="C:plasma membrane"/>
    <property type="evidence" value="ECO:0007669"/>
    <property type="project" value="UniProtKB-SubCell"/>
</dbReference>
<dbReference type="GO" id="GO:0005315">
    <property type="term" value="F:phosphate transmembrane transporter activity"/>
    <property type="evidence" value="ECO:0007669"/>
    <property type="project" value="InterPro"/>
</dbReference>
<dbReference type="GO" id="GO:0015293">
    <property type="term" value="F:symporter activity"/>
    <property type="evidence" value="ECO:0007669"/>
    <property type="project" value="UniProtKB-KW"/>
</dbReference>
<dbReference type="GO" id="GO:0035435">
    <property type="term" value="P:phosphate ion transmembrane transport"/>
    <property type="evidence" value="ECO:0007669"/>
    <property type="project" value="TreeGrafter"/>
</dbReference>
<dbReference type="InterPro" id="IPR001204">
    <property type="entry name" value="Phos_transporter"/>
</dbReference>
<dbReference type="PANTHER" id="PTHR11101:SF65">
    <property type="entry name" value="LOW-AFFINITY INORGANIC PHOSPHATE TRANSPORTER PITA-RELATED"/>
    <property type="match status" value="1"/>
</dbReference>
<dbReference type="PANTHER" id="PTHR11101">
    <property type="entry name" value="PHOSPHATE TRANSPORTER"/>
    <property type="match status" value="1"/>
</dbReference>
<dbReference type="Pfam" id="PF01384">
    <property type="entry name" value="PHO4"/>
    <property type="match status" value="1"/>
</dbReference>
<feature type="chain" id="PRO_0000080787" description="Low-affinity inorganic phosphate transporter">
    <location>
        <begin position="1"/>
        <end position="490"/>
    </location>
</feature>
<feature type="transmembrane region" description="Helical" evidence="2">
    <location>
        <begin position="12"/>
        <end position="32"/>
    </location>
</feature>
<feature type="transmembrane region" description="Helical" evidence="2">
    <location>
        <begin position="52"/>
        <end position="72"/>
    </location>
</feature>
<feature type="transmembrane region" description="Helical" evidence="2">
    <location>
        <begin position="94"/>
        <end position="114"/>
    </location>
</feature>
<feature type="transmembrane region" description="Helical" evidence="2">
    <location>
        <begin position="124"/>
        <end position="144"/>
    </location>
</feature>
<feature type="transmembrane region" description="Helical" evidence="2">
    <location>
        <begin position="155"/>
        <end position="175"/>
    </location>
</feature>
<feature type="transmembrane region" description="Helical" evidence="2">
    <location>
        <begin position="205"/>
        <end position="225"/>
    </location>
</feature>
<feature type="transmembrane region" description="Helical" evidence="2">
    <location>
        <begin position="233"/>
        <end position="253"/>
    </location>
</feature>
<feature type="transmembrane region" description="Helical" evidence="2">
    <location>
        <begin position="373"/>
        <end position="393"/>
    </location>
</feature>
<feature type="transmembrane region" description="Helical" evidence="2">
    <location>
        <begin position="421"/>
        <end position="441"/>
    </location>
</feature>
<feature type="transmembrane region" description="Helical" evidence="2">
    <location>
        <begin position="470"/>
        <end position="490"/>
    </location>
</feature>
<keyword id="KW-1003">Cell membrane</keyword>
<keyword id="KW-0472">Membrane</keyword>
<keyword id="KW-0592">Phosphate transport</keyword>
<keyword id="KW-1185">Reference proteome</keyword>
<keyword id="KW-0769">Symport</keyword>
<keyword id="KW-0812">Transmembrane</keyword>
<keyword id="KW-1133">Transmembrane helix</keyword>
<keyword id="KW-0813">Transport</keyword>
<protein>
    <recommendedName>
        <fullName>Low-affinity inorganic phosphate transporter</fullName>
    </recommendedName>
</protein>
<name>PIT_BUCAI</name>
<comment type="function">
    <text evidence="1">Low-affinity inorganic phosphate transporter.</text>
</comment>
<comment type="catalytic activity">
    <reaction evidence="1">
        <text>phosphate(in) + H(+)(in) = phosphate(out) + H(+)(out)</text>
        <dbReference type="Rhea" id="RHEA:29939"/>
        <dbReference type="ChEBI" id="CHEBI:15378"/>
        <dbReference type="ChEBI" id="CHEBI:43474"/>
    </reaction>
</comment>
<comment type="subcellular location">
    <subcellularLocation>
        <location evidence="3">Cell membrane</location>
        <topology evidence="2">Multi-pass membrane protein</topology>
    </subcellularLocation>
</comment>
<comment type="similarity">
    <text evidence="3">Belongs to the inorganic phosphate transporter (PiT) (TC 2.A.20) family. Pit subfamily.</text>
</comment>